<keyword id="KW-0238">DNA-binding</keyword>
<keyword id="KW-0244">Early protein</keyword>
<keyword id="KW-1035">Host cytoplasm</keyword>
<keyword id="KW-0670">Pyruvate</keyword>
<keyword id="KW-0678">Repressor</keyword>
<keyword id="KW-0804">Transcription</keyword>
<keyword id="KW-0805">Transcription regulation</keyword>
<proteinExistence type="evidence at transcript level"/>
<comment type="function">
    <text evidence="1">Switches off the PcM promoter thereby blocking expression of the major repressor Repc (latency factor) and favoring transcription from the early promoter (Pe) and hence viral transposition and lytic development. Negatively regulates the early promoter (Pe) thereby controlling its own expression and keeping the level of early genes expression independent of the viral genome copy number (By similarity).</text>
</comment>
<comment type="subcellular location">
    <subcellularLocation>
        <location evidence="1">Host cytoplasm</location>
    </subcellularLocation>
</comment>
<comment type="induction">
    <text>Expressed in the early phase of the viral replicative cycle. Early gene transcription is repressed by viral Repc (latency) and favored by viral Ner protein (lytic development).</text>
</comment>
<comment type="similarity">
    <text evidence="2">Belongs to the ner transcriptional regulatory family.</text>
</comment>
<feature type="chain" id="PRO_0000062783" description="Negative regulator of transcription">
    <location>
        <begin position="1"/>
        <end position="73"/>
    </location>
</feature>
<feature type="DNA-binding region" description="H-T-H motif" evidence="2">
    <location>
        <begin position="28"/>
        <end position="47"/>
    </location>
</feature>
<organism>
    <name type="scientific">Escherichia phage D108</name>
    <name type="common">Bacteriophage D108</name>
    <dbReference type="NCBI Taxonomy" id="665033"/>
    <lineage>
        <taxon>Viruses</taxon>
        <taxon>Duplodnaviria</taxon>
        <taxon>Heunggongvirae</taxon>
        <taxon>Uroviricota</taxon>
        <taxon>Caudoviricetes</taxon>
        <taxon>Muvirus</taxon>
        <taxon>Muvirus mu</taxon>
    </lineage>
</organism>
<dbReference type="EMBL" id="M26291">
    <property type="protein sequence ID" value="AAA32206.1"/>
    <property type="molecule type" value="Genomic_DNA"/>
</dbReference>
<dbReference type="EMBL" id="X03847">
    <property type="protein sequence ID" value="CAA27475.1"/>
    <property type="molecule type" value="Genomic_DNA"/>
</dbReference>
<dbReference type="EMBL" id="GQ357916">
    <property type="protein sequence ID" value="ACV50261.1"/>
    <property type="molecule type" value="Genomic_DNA"/>
</dbReference>
<dbReference type="PIR" id="A24680">
    <property type="entry name" value="DNBPD8"/>
</dbReference>
<dbReference type="RefSeq" id="YP_003335750.1">
    <property type="nucleotide sequence ID" value="NC_013594.1"/>
</dbReference>
<dbReference type="SMR" id="P06903"/>
<dbReference type="GeneID" id="8658813"/>
<dbReference type="KEGG" id="vg:8658813"/>
<dbReference type="OrthoDB" id="27415at10239"/>
<dbReference type="Proteomes" id="UP000000320">
    <property type="component" value="Genome"/>
</dbReference>
<dbReference type="GO" id="GO:0030430">
    <property type="term" value="C:host cell cytoplasm"/>
    <property type="evidence" value="ECO:0007669"/>
    <property type="project" value="UniProtKB-SubCell"/>
</dbReference>
<dbReference type="GO" id="GO:0003677">
    <property type="term" value="F:DNA binding"/>
    <property type="evidence" value="ECO:0007669"/>
    <property type="project" value="UniProtKB-KW"/>
</dbReference>
<dbReference type="Gene3D" id="1.10.260.40">
    <property type="entry name" value="lambda repressor-like DNA-binding domains"/>
    <property type="match status" value="1"/>
</dbReference>
<dbReference type="InterPro" id="IPR010982">
    <property type="entry name" value="Lambda_DNA-bd_dom_sf"/>
</dbReference>
<dbReference type="InterPro" id="IPR038722">
    <property type="entry name" value="Ner_HTH_dom"/>
</dbReference>
<dbReference type="Pfam" id="PF13693">
    <property type="entry name" value="HTH_35"/>
    <property type="match status" value="1"/>
</dbReference>
<dbReference type="SUPFAM" id="SSF47413">
    <property type="entry name" value="lambda repressor-like DNA-binding domains"/>
    <property type="match status" value="1"/>
</dbReference>
<reference key="1">
    <citation type="journal article" date="1985" name="EMBO J.">
        <title>The cloning and characterization of the bacteriophage D108 regulatory DNA-binding protein ner.</title>
        <authorList>
            <person name="Tolias P.P."/>
            <person name="Dubow M.S."/>
        </authorList>
    </citation>
    <scope>NUCLEOTIDE SEQUENCE [GENOMIC DNA]</scope>
</reference>
<reference key="2">
    <citation type="journal article" date="1986" name="Nucleic Acids Res.">
        <title>DNA sequence of the control region of phage D108: the N-terminal amino acid sequences of repressor and transposase are similar both in phage D108 and in its relative, phage Mu.</title>
        <authorList>
            <person name="Mizuuchi M."/>
            <person name="Weisberg R.A."/>
            <person name="Mizuuchi K."/>
        </authorList>
    </citation>
    <scope>NUCLEOTIDE SEQUENCE [GENOMIC DNA]</scope>
</reference>
<reference key="3">
    <citation type="submission" date="2009-07" db="EMBL/GenBank/DDBJ databases">
        <authorList>
            <person name="Kropinski A.M."/>
            <person name="Villegas A."/>
            <person name="Lingohr E.J."/>
        </authorList>
    </citation>
    <scope>NUCLEOTIDE SEQUENCE [GENOMIC DNA]</scope>
</reference>
<gene>
    <name type="primary">ner</name>
</gene>
<sequence length="73" mass="8534">MHMNKRTNRQDWHRADIVAELRKRNMSLAELGRSNHLSSSTLKNALDKRYPKAEKIIADALGMTPQDIWPSRY</sequence>
<protein>
    <recommendedName>
        <fullName>Negative regulator of transcription</fullName>
        <shortName>Ner</shortName>
    </recommendedName>
</protein>
<organismHost>
    <name type="scientific">Escherichia coli</name>
    <dbReference type="NCBI Taxonomy" id="562"/>
</organismHost>
<evidence type="ECO:0000250" key="1"/>
<evidence type="ECO:0000305" key="2"/>
<name>NER_BPD10</name>
<accession>P06903</accession>
<accession>C9DGL0</accession>